<accession>O83546</accession>
<organism>
    <name type="scientific">Treponema pallidum (strain Nichols)</name>
    <dbReference type="NCBI Taxonomy" id="243276"/>
    <lineage>
        <taxon>Bacteria</taxon>
        <taxon>Pseudomonadati</taxon>
        <taxon>Spirochaetota</taxon>
        <taxon>Spirochaetia</taxon>
        <taxon>Spirochaetales</taxon>
        <taxon>Treponemataceae</taxon>
        <taxon>Treponema</taxon>
    </lineage>
</organism>
<gene>
    <name type="ordered locus">TP_0535</name>
</gene>
<keyword id="KW-1185">Reference proteome</keyword>
<reference key="1">
    <citation type="journal article" date="1998" name="Science">
        <title>Complete genome sequence of Treponema pallidum, the syphilis spirochete.</title>
        <authorList>
            <person name="Fraser C.M."/>
            <person name="Norris S.J."/>
            <person name="Weinstock G.M."/>
            <person name="White O."/>
            <person name="Sutton G.G."/>
            <person name="Dodson R.J."/>
            <person name="Gwinn M.L."/>
            <person name="Hickey E.K."/>
            <person name="Clayton R.A."/>
            <person name="Ketchum K.A."/>
            <person name="Sodergren E."/>
            <person name="Hardham J.M."/>
            <person name="McLeod M.P."/>
            <person name="Salzberg S.L."/>
            <person name="Peterson J.D."/>
            <person name="Khalak H.G."/>
            <person name="Richardson D.L."/>
            <person name="Howell J.K."/>
            <person name="Chidambaram M."/>
            <person name="Utterback T.R."/>
            <person name="McDonald L.A."/>
            <person name="Artiach P."/>
            <person name="Bowman C."/>
            <person name="Cotton M.D."/>
            <person name="Fujii C."/>
            <person name="Garland S.A."/>
            <person name="Hatch B."/>
            <person name="Horst K."/>
            <person name="Roberts K.M."/>
            <person name="Sandusky M."/>
            <person name="Weidman J.F."/>
            <person name="Smith H.O."/>
            <person name="Venter J.C."/>
        </authorList>
    </citation>
    <scope>NUCLEOTIDE SEQUENCE [LARGE SCALE GENOMIC DNA]</scope>
    <source>
        <strain>Nichols</strain>
    </source>
</reference>
<name>Y535_TREPA</name>
<feature type="chain" id="PRO_0000202271" description="Uncharacterized protein TP_0535">
    <location>
        <begin position="1"/>
        <end position="70"/>
    </location>
</feature>
<proteinExistence type="predicted"/>
<dbReference type="EMBL" id="AE000520">
    <property type="protein sequence ID" value="AAC65521.1"/>
    <property type="molecule type" value="Genomic_DNA"/>
</dbReference>
<dbReference type="PIR" id="H71313">
    <property type="entry name" value="H71313"/>
</dbReference>
<dbReference type="RefSeq" id="WP_010881982.1">
    <property type="nucleotide sequence ID" value="NC_021490.2"/>
</dbReference>
<dbReference type="SMR" id="O83546"/>
<dbReference type="STRING" id="243276.TP_0535"/>
<dbReference type="EnsemblBacteria" id="AAC65521">
    <property type="protein sequence ID" value="AAC65521"/>
    <property type="gene ID" value="TP_0535"/>
</dbReference>
<dbReference type="KEGG" id="tpa:TP_0535"/>
<dbReference type="KEGG" id="tpw:TPANIC_0535"/>
<dbReference type="HOGENOM" id="CLU_2756626_0_0_12"/>
<dbReference type="Proteomes" id="UP000000811">
    <property type="component" value="Chromosome"/>
</dbReference>
<protein>
    <recommendedName>
        <fullName>Uncharacterized protein TP_0535</fullName>
    </recommendedName>
</protein>
<sequence>MRESAEAAGETLVKEAEGSVVEAQEQAWHEACARIDAQRREACGQLERELSVLEEDVERFEAFLDGFFFG</sequence>